<protein>
    <recommendedName>
        <fullName evidence="1">Protein CUSTOS</fullName>
    </recommendedName>
</protein>
<comment type="function">
    <text evidence="1">Plays a role in the regulation of Wnt signaling pathway during early development.</text>
</comment>
<comment type="interaction">
    <interactant intactId="EBI-11305571">
        <id>Q96C57</id>
    </interactant>
    <interactant intactId="EBI-710997">
        <id>P54274</id>
        <label>TERF1</label>
    </interactant>
    <organismsDiffer>false</organismsDiffer>
    <experiments>2</experiments>
</comment>
<comment type="subcellular location">
    <subcellularLocation>
        <location evidence="1">Nucleus envelope</location>
    </subcellularLocation>
</comment>
<comment type="similarity">
    <text evidence="3">Belongs to the CUSTOS family.</text>
</comment>
<proteinExistence type="evidence at protein level"/>
<feature type="chain" id="PRO_0000276850" description="Protein CUSTOS">
    <location>
        <begin position="1"/>
        <end position="262"/>
    </location>
</feature>
<feature type="region of interest" description="Disordered" evidence="2">
    <location>
        <begin position="1"/>
        <end position="79"/>
    </location>
</feature>
<feature type="region of interest" description="Disordered" evidence="2">
    <location>
        <begin position="126"/>
        <end position="262"/>
    </location>
</feature>
<feature type="short sequence motif" description="Nucleolar localization signal (NLS)" evidence="1">
    <location>
        <begin position="236"/>
        <end position="241"/>
    </location>
</feature>
<feature type="compositionally biased region" description="Low complexity" evidence="2">
    <location>
        <begin position="9"/>
        <end position="18"/>
    </location>
</feature>
<feature type="compositionally biased region" description="Polar residues" evidence="2">
    <location>
        <begin position="51"/>
        <end position="61"/>
    </location>
</feature>
<feature type="compositionally biased region" description="Basic residues" evidence="2">
    <location>
        <begin position="188"/>
        <end position="199"/>
    </location>
</feature>
<feature type="compositionally biased region" description="Low complexity" evidence="2">
    <location>
        <begin position="200"/>
        <end position="209"/>
    </location>
</feature>
<feature type="compositionally biased region" description="Polar residues" evidence="2">
    <location>
        <begin position="210"/>
        <end position="221"/>
    </location>
</feature>
<feature type="modified residue" description="Phosphoserine" evidence="7">
    <location>
        <position position="61"/>
    </location>
</feature>
<feature type="modified residue" description="Phosphothreonine" evidence="7">
    <location>
        <position position="79"/>
    </location>
</feature>
<feature type="modified residue" description="Phosphoserine" evidence="4 6">
    <location>
        <position position="138"/>
    </location>
</feature>
<feature type="modified residue" description="Phosphothreonine" evidence="7">
    <location>
        <position position="182"/>
    </location>
</feature>
<feature type="modified residue" description="Phosphothreonine" evidence="5 7">
    <location>
        <position position="211"/>
    </location>
</feature>
<feature type="sequence variant" id="VAR_030491" description="In dbSNP:rs11537857.">
    <original>G</original>
    <variation>R</variation>
    <location>
        <position position="44"/>
    </location>
</feature>
<feature type="sequence conflict" description="In Ref. 2; BAD96350." evidence="3" ref="2">
    <original>E</original>
    <variation>A</variation>
    <location>
        <position position="106"/>
    </location>
</feature>
<feature type="sequence conflict" description="In Ref. 3; AAH14661." evidence="3" ref="3">
    <original>S</original>
    <variation>SS</variation>
    <location>
        <position position="151"/>
    </location>
</feature>
<keyword id="KW-0217">Developmental protein</keyword>
<keyword id="KW-0539">Nucleus</keyword>
<keyword id="KW-0597">Phosphoprotein</keyword>
<keyword id="KW-1267">Proteomics identification</keyword>
<keyword id="KW-1185">Reference proteome</keyword>
<keyword id="KW-0879">Wnt signaling pathway</keyword>
<gene>
    <name evidence="1" type="primary">CUSTOS</name>
    <name type="synonym">C12orf43</name>
</gene>
<name>CSTOS_HUMAN</name>
<accession>Q96C57</accession>
<accession>Q53HF0</accession>
<accession>Q9H9Z7</accession>
<evidence type="ECO:0000250" key="1">
    <source>
        <dbReference type="UniProtKB" id="A9C3N6"/>
    </source>
</evidence>
<evidence type="ECO:0000256" key="2">
    <source>
        <dbReference type="SAM" id="MobiDB-lite"/>
    </source>
</evidence>
<evidence type="ECO:0000305" key="3"/>
<evidence type="ECO:0007744" key="4">
    <source>
    </source>
</evidence>
<evidence type="ECO:0007744" key="5">
    <source>
    </source>
</evidence>
<evidence type="ECO:0007744" key="6">
    <source>
    </source>
</evidence>
<evidence type="ECO:0007744" key="7">
    <source>
    </source>
</evidence>
<sequence length="262" mass="28171">MAAPSGTVSDSESSNSSSDAEELERCREAAMPAWGLEQRPHVAGKPRAGAANSQLSTSQPSLRHKVNEHEQDGNELQTTPEFRAHVAKKLGALLDSFITISEAAKEPAKAKVQKVALEDDGFRLFFTSVPGGREKEESPQPRRKRQPSSSSEDSDEEWRRCREAAVSASDILQESAIHSPGTVEKEAKKKRKLKKKAKKVASVDSAVAATTPTSMATVQKQKSGELNGDQVSLGTKKKKKAKKASETSPFPPAKSATAIPAN</sequence>
<dbReference type="EMBL" id="AK022510">
    <property type="protein sequence ID" value="BAB14068.1"/>
    <property type="molecule type" value="mRNA"/>
</dbReference>
<dbReference type="EMBL" id="AK222630">
    <property type="protein sequence ID" value="BAD96350.1"/>
    <property type="molecule type" value="mRNA"/>
</dbReference>
<dbReference type="EMBL" id="BC014661">
    <property type="protein sequence ID" value="AAH14661.1"/>
    <property type="molecule type" value="mRNA"/>
</dbReference>
<dbReference type="CCDS" id="CCDS9210.1"/>
<dbReference type="RefSeq" id="NP_001273120.1">
    <property type="nucleotide sequence ID" value="NM_001286191.1"/>
</dbReference>
<dbReference type="RefSeq" id="NP_001273121.1">
    <property type="nucleotide sequence ID" value="NM_001286192.1"/>
</dbReference>
<dbReference type="RefSeq" id="NP_001273124.1">
    <property type="nucleotide sequence ID" value="NM_001286195.1"/>
</dbReference>
<dbReference type="RefSeq" id="NP_001273125.1">
    <property type="nucleotide sequence ID" value="NM_001286196.1"/>
</dbReference>
<dbReference type="RefSeq" id="NP_001273126.1">
    <property type="nucleotide sequence ID" value="NM_001286197.1"/>
</dbReference>
<dbReference type="RefSeq" id="NP_001273127.1">
    <property type="nucleotide sequence ID" value="NM_001286198.1"/>
</dbReference>
<dbReference type="RefSeq" id="NP_075046.1">
    <property type="nucleotide sequence ID" value="NM_022895.2"/>
</dbReference>
<dbReference type="BioGRID" id="122339">
    <property type="interactions" value="72"/>
</dbReference>
<dbReference type="FunCoup" id="Q96C57">
    <property type="interactions" value="924"/>
</dbReference>
<dbReference type="IntAct" id="Q96C57">
    <property type="interactions" value="46"/>
</dbReference>
<dbReference type="STRING" id="9606.ENSP00000442224"/>
<dbReference type="GlyGen" id="Q96C57">
    <property type="glycosylation" value="1 site, 2 O-linked glycans (1 site)"/>
</dbReference>
<dbReference type="iPTMnet" id="Q96C57"/>
<dbReference type="MetOSite" id="Q96C57"/>
<dbReference type="PhosphoSitePlus" id="Q96C57"/>
<dbReference type="BioMuta" id="C12orf43"/>
<dbReference type="DMDM" id="125863775"/>
<dbReference type="jPOST" id="Q96C57"/>
<dbReference type="MassIVE" id="Q96C57"/>
<dbReference type="PaxDb" id="9606-ENSP00000437803"/>
<dbReference type="PeptideAtlas" id="Q96C57"/>
<dbReference type="ProteomicsDB" id="76161"/>
<dbReference type="Pumba" id="Q96C57"/>
<dbReference type="Antibodypedia" id="51084">
    <property type="antibodies" value="35 antibodies from 10 providers"/>
</dbReference>
<dbReference type="DNASU" id="64897"/>
<dbReference type="Ensembl" id="ENST00000288757.7">
    <property type="protein sequence ID" value="ENSP00000288757.5"/>
    <property type="gene ID" value="ENSG00000157895.11"/>
</dbReference>
<dbReference type="GeneID" id="64897"/>
<dbReference type="KEGG" id="hsa:64897"/>
<dbReference type="MANE-Select" id="ENST00000288757.7">
    <property type="protein sequence ID" value="ENSP00000288757.5"/>
    <property type="RefSeq nucleotide sequence ID" value="NM_022895.3"/>
    <property type="RefSeq protein sequence ID" value="NP_075046.1"/>
</dbReference>
<dbReference type="UCSC" id="uc001tzh.3">
    <property type="organism name" value="human"/>
</dbReference>
<dbReference type="AGR" id="HGNC:25719"/>
<dbReference type="CTD" id="64897"/>
<dbReference type="DisGeNET" id="64897"/>
<dbReference type="GeneCards" id="C12orf43"/>
<dbReference type="HGNC" id="HGNC:25719">
    <property type="gene designation" value="C12orf43"/>
</dbReference>
<dbReference type="HPA" id="ENSG00000157895">
    <property type="expression patterns" value="Low tissue specificity"/>
</dbReference>
<dbReference type="MalaCards" id="C12orf43"/>
<dbReference type="neXtProt" id="NX_Q96C57"/>
<dbReference type="OpenTargets" id="ENSG00000157895"/>
<dbReference type="PharmGKB" id="PA143485373"/>
<dbReference type="VEuPathDB" id="HostDB:ENSG00000157895"/>
<dbReference type="eggNOG" id="ENOG502S3AI">
    <property type="taxonomic scope" value="Eukaryota"/>
</dbReference>
<dbReference type="GeneTree" id="ENSGT00390000010771"/>
<dbReference type="InParanoid" id="Q96C57"/>
<dbReference type="OMA" id="WDCTALA"/>
<dbReference type="OrthoDB" id="10053459at2759"/>
<dbReference type="PAN-GO" id="Q96C57">
    <property type="GO annotations" value="2 GO annotations based on evolutionary models"/>
</dbReference>
<dbReference type="PhylomeDB" id="Q96C57"/>
<dbReference type="TreeFam" id="TF336221"/>
<dbReference type="PathwayCommons" id="Q96C57"/>
<dbReference type="SignaLink" id="Q96C57"/>
<dbReference type="BioGRID-ORCS" id="64897">
    <property type="hits" value="19 hits in 1104 CRISPR screens"/>
</dbReference>
<dbReference type="CD-CODE" id="91857CE7">
    <property type="entry name" value="Nucleolus"/>
</dbReference>
<dbReference type="GeneWiki" id="C12orf43"/>
<dbReference type="GenomeRNAi" id="64897"/>
<dbReference type="Pharos" id="Q96C57">
    <property type="development level" value="Tdark"/>
</dbReference>
<dbReference type="PRO" id="PR:Q96C57"/>
<dbReference type="Proteomes" id="UP000005640">
    <property type="component" value="Chromosome 12"/>
</dbReference>
<dbReference type="RNAct" id="Q96C57">
    <property type="molecule type" value="protein"/>
</dbReference>
<dbReference type="Bgee" id="ENSG00000157895">
    <property type="expression patterns" value="Expressed in secondary oocyte and 179 other cell types or tissues"/>
</dbReference>
<dbReference type="ExpressionAtlas" id="Q96C57">
    <property type="expression patterns" value="baseline and differential"/>
</dbReference>
<dbReference type="GO" id="GO:0005635">
    <property type="term" value="C:nuclear envelope"/>
    <property type="evidence" value="ECO:0007669"/>
    <property type="project" value="UniProtKB-SubCell"/>
</dbReference>
<dbReference type="GO" id="GO:0030178">
    <property type="term" value="P:negative regulation of Wnt signaling pathway"/>
    <property type="evidence" value="ECO:0000318"/>
    <property type="project" value="GO_Central"/>
</dbReference>
<dbReference type="GO" id="GO:0060061">
    <property type="term" value="P:Spemann organizer formation"/>
    <property type="evidence" value="ECO:0000318"/>
    <property type="project" value="GO_Central"/>
</dbReference>
<dbReference type="GO" id="GO:0016055">
    <property type="term" value="P:Wnt signaling pathway"/>
    <property type="evidence" value="ECO:0007669"/>
    <property type="project" value="UniProtKB-KW"/>
</dbReference>
<dbReference type="InterPro" id="IPR026694">
    <property type="entry name" value="CUSTOS"/>
</dbReference>
<dbReference type="PANTHER" id="PTHR14482">
    <property type="entry name" value="CHROMOSOME 12 ORF 43 HOMOLOG"/>
    <property type="match status" value="1"/>
</dbReference>
<dbReference type="PANTHER" id="PTHR14482:SF0">
    <property type="entry name" value="PROTEIN CUSTOS"/>
    <property type="match status" value="1"/>
</dbReference>
<dbReference type="Pfam" id="PF23999">
    <property type="entry name" value="CUSTOS"/>
    <property type="match status" value="1"/>
</dbReference>
<organism>
    <name type="scientific">Homo sapiens</name>
    <name type="common">Human</name>
    <dbReference type="NCBI Taxonomy" id="9606"/>
    <lineage>
        <taxon>Eukaryota</taxon>
        <taxon>Metazoa</taxon>
        <taxon>Chordata</taxon>
        <taxon>Craniata</taxon>
        <taxon>Vertebrata</taxon>
        <taxon>Euteleostomi</taxon>
        <taxon>Mammalia</taxon>
        <taxon>Eutheria</taxon>
        <taxon>Euarchontoglires</taxon>
        <taxon>Primates</taxon>
        <taxon>Haplorrhini</taxon>
        <taxon>Catarrhini</taxon>
        <taxon>Hominidae</taxon>
        <taxon>Homo</taxon>
    </lineage>
</organism>
<reference key="1">
    <citation type="journal article" date="2004" name="Nat. Genet.">
        <title>Complete sequencing and characterization of 21,243 full-length human cDNAs.</title>
        <authorList>
            <person name="Ota T."/>
            <person name="Suzuki Y."/>
            <person name="Nishikawa T."/>
            <person name="Otsuki T."/>
            <person name="Sugiyama T."/>
            <person name="Irie R."/>
            <person name="Wakamatsu A."/>
            <person name="Hayashi K."/>
            <person name="Sato H."/>
            <person name="Nagai K."/>
            <person name="Kimura K."/>
            <person name="Makita H."/>
            <person name="Sekine M."/>
            <person name="Obayashi M."/>
            <person name="Nishi T."/>
            <person name="Shibahara T."/>
            <person name="Tanaka T."/>
            <person name="Ishii S."/>
            <person name="Yamamoto J."/>
            <person name="Saito K."/>
            <person name="Kawai Y."/>
            <person name="Isono Y."/>
            <person name="Nakamura Y."/>
            <person name="Nagahari K."/>
            <person name="Murakami K."/>
            <person name="Yasuda T."/>
            <person name="Iwayanagi T."/>
            <person name="Wagatsuma M."/>
            <person name="Shiratori A."/>
            <person name="Sudo H."/>
            <person name="Hosoiri T."/>
            <person name="Kaku Y."/>
            <person name="Kodaira H."/>
            <person name="Kondo H."/>
            <person name="Sugawara M."/>
            <person name="Takahashi M."/>
            <person name="Kanda K."/>
            <person name="Yokoi T."/>
            <person name="Furuya T."/>
            <person name="Kikkawa E."/>
            <person name="Omura Y."/>
            <person name="Abe K."/>
            <person name="Kamihara K."/>
            <person name="Katsuta N."/>
            <person name="Sato K."/>
            <person name="Tanikawa M."/>
            <person name="Yamazaki M."/>
            <person name="Ninomiya K."/>
            <person name="Ishibashi T."/>
            <person name="Yamashita H."/>
            <person name="Murakawa K."/>
            <person name="Fujimori K."/>
            <person name="Tanai H."/>
            <person name="Kimata M."/>
            <person name="Watanabe M."/>
            <person name="Hiraoka S."/>
            <person name="Chiba Y."/>
            <person name="Ishida S."/>
            <person name="Ono Y."/>
            <person name="Takiguchi S."/>
            <person name="Watanabe S."/>
            <person name="Yosida M."/>
            <person name="Hotuta T."/>
            <person name="Kusano J."/>
            <person name="Kanehori K."/>
            <person name="Takahashi-Fujii A."/>
            <person name="Hara H."/>
            <person name="Tanase T.-O."/>
            <person name="Nomura Y."/>
            <person name="Togiya S."/>
            <person name="Komai F."/>
            <person name="Hara R."/>
            <person name="Takeuchi K."/>
            <person name="Arita M."/>
            <person name="Imose N."/>
            <person name="Musashino K."/>
            <person name="Yuuki H."/>
            <person name="Oshima A."/>
            <person name="Sasaki N."/>
            <person name="Aotsuka S."/>
            <person name="Yoshikawa Y."/>
            <person name="Matsunawa H."/>
            <person name="Ichihara T."/>
            <person name="Shiohata N."/>
            <person name="Sano S."/>
            <person name="Moriya S."/>
            <person name="Momiyama H."/>
            <person name="Satoh N."/>
            <person name="Takami S."/>
            <person name="Terashima Y."/>
            <person name="Suzuki O."/>
            <person name="Nakagawa S."/>
            <person name="Senoh A."/>
            <person name="Mizoguchi H."/>
            <person name="Goto Y."/>
            <person name="Shimizu F."/>
            <person name="Wakebe H."/>
            <person name="Hishigaki H."/>
            <person name="Watanabe T."/>
            <person name="Sugiyama A."/>
            <person name="Takemoto M."/>
            <person name="Kawakami B."/>
            <person name="Yamazaki M."/>
            <person name="Watanabe K."/>
            <person name="Kumagai A."/>
            <person name="Itakura S."/>
            <person name="Fukuzumi Y."/>
            <person name="Fujimori Y."/>
            <person name="Komiyama M."/>
            <person name="Tashiro H."/>
            <person name="Tanigami A."/>
            <person name="Fujiwara T."/>
            <person name="Ono T."/>
            <person name="Yamada K."/>
            <person name="Fujii Y."/>
            <person name="Ozaki K."/>
            <person name="Hirao M."/>
            <person name="Ohmori Y."/>
            <person name="Kawabata A."/>
            <person name="Hikiji T."/>
            <person name="Kobatake N."/>
            <person name="Inagaki H."/>
            <person name="Ikema Y."/>
            <person name="Okamoto S."/>
            <person name="Okitani R."/>
            <person name="Kawakami T."/>
            <person name="Noguchi S."/>
            <person name="Itoh T."/>
            <person name="Shigeta K."/>
            <person name="Senba T."/>
            <person name="Matsumura K."/>
            <person name="Nakajima Y."/>
            <person name="Mizuno T."/>
            <person name="Morinaga M."/>
            <person name="Sasaki M."/>
            <person name="Togashi T."/>
            <person name="Oyama M."/>
            <person name="Hata H."/>
            <person name="Watanabe M."/>
            <person name="Komatsu T."/>
            <person name="Mizushima-Sugano J."/>
            <person name="Satoh T."/>
            <person name="Shirai Y."/>
            <person name="Takahashi Y."/>
            <person name="Nakagawa K."/>
            <person name="Okumura K."/>
            <person name="Nagase T."/>
            <person name="Nomura N."/>
            <person name="Kikuchi H."/>
            <person name="Masuho Y."/>
            <person name="Yamashita R."/>
            <person name="Nakai K."/>
            <person name="Yada T."/>
            <person name="Nakamura Y."/>
            <person name="Ohara O."/>
            <person name="Isogai T."/>
            <person name="Sugano S."/>
        </authorList>
    </citation>
    <scope>NUCLEOTIDE SEQUENCE [LARGE SCALE MRNA]</scope>
</reference>
<reference key="2">
    <citation type="submission" date="2005-04" db="EMBL/GenBank/DDBJ databases">
        <authorList>
            <person name="Suzuki Y."/>
            <person name="Sugano S."/>
            <person name="Totoki Y."/>
            <person name="Toyoda A."/>
            <person name="Takeda T."/>
            <person name="Sakaki Y."/>
            <person name="Tanaka A."/>
            <person name="Yokoyama S."/>
        </authorList>
    </citation>
    <scope>NUCLEOTIDE SEQUENCE [LARGE SCALE MRNA]</scope>
    <source>
        <tissue>Cerebellum</tissue>
    </source>
</reference>
<reference key="3">
    <citation type="journal article" date="2004" name="Genome Res.">
        <title>The status, quality, and expansion of the NIH full-length cDNA project: the Mammalian Gene Collection (MGC).</title>
        <authorList>
            <consortium name="The MGC Project Team"/>
        </authorList>
    </citation>
    <scope>NUCLEOTIDE SEQUENCE [LARGE SCALE MRNA]</scope>
    <source>
        <tissue>Skin</tissue>
    </source>
</reference>
<reference key="4">
    <citation type="journal article" date="2006" name="Cell">
        <title>Global, in vivo, and site-specific phosphorylation dynamics in signaling networks.</title>
        <authorList>
            <person name="Olsen J.V."/>
            <person name="Blagoev B."/>
            <person name="Gnad F."/>
            <person name="Macek B."/>
            <person name="Kumar C."/>
            <person name="Mortensen P."/>
            <person name="Mann M."/>
        </authorList>
    </citation>
    <scope>PHOSPHORYLATION [LARGE SCALE ANALYSIS] AT SER-138</scope>
    <scope>IDENTIFICATION BY MASS SPECTROMETRY [LARGE SCALE ANALYSIS]</scope>
    <source>
        <tissue>Cervix carcinoma</tissue>
    </source>
</reference>
<reference key="5">
    <citation type="journal article" date="2008" name="Proc. Natl. Acad. Sci. U.S.A.">
        <title>A quantitative atlas of mitotic phosphorylation.</title>
        <authorList>
            <person name="Dephoure N."/>
            <person name="Zhou C."/>
            <person name="Villen J."/>
            <person name="Beausoleil S.A."/>
            <person name="Bakalarski C.E."/>
            <person name="Elledge S.J."/>
            <person name="Gygi S.P."/>
        </authorList>
    </citation>
    <scope>PHOSPHORYLATION [LARGE SCALE ANALYSIS] AT THR-211</scope>
    <scope>IDENTIFICATION BY MASS SPECTROMETRY [LARGE SCALE ANALYSIS]</scope>
    <source>
        <tissue>Cervix carcinoma</tissue>
    </source>
</reference>
<reference key="6">
    <citation type="journal article" date="2009" name="Anal. Chem.">
        <title>Lys-N and trypsin cover complementary parts of the phosphoproteome in a refined SCX-based approach.</title>
        <authorList>
            <person name="Gauci S."/>
            <person name="Helbig A.O."/>
            <person name="Slijper M."/>
            <person name="Krijgsveld J."/>
            <person name="Heck A.J."/>
            <person name="Mohammed S."/>
        </authorList>
    </citation>
    <scope>IDENTIFICATION BY MASS SPECTROMETRY [LARGE SCALE ANALYSIS]</scope>
</reference>
<reference key="7">
    <citation type="journal article" date="2010" name="Sci. Signal.">
        <title>Quantitative phosphoproteomics reveals widespread full phosphorylation site occupancy during mitosis.</title>
        <authorList>
            <person name="Olsen J.V."/>
            <person name="Vermeulen M."/>
            <person name="Santamaria A."/>
            <person name="Kumar C."/>
            <person name="Miller M.L."/>
            <person name="Jensen L.J."/>
            <person name="Gnad F."/>
            <person name="Cox J."/>
            <person name="Jensen T.S."/>
            <person name="Nigg E.A."/>
            <person name="Brunak S."/>
            <person name="Mann M."/>
        </authorList>
    </citation>
    <scope>PHOSPHORYLATION [LARGE SCALE ANALYSIS] AT SER-138</scope>
    <scope>IDENTIFICATION BY MASS SPECTROMETRY [LARGE SCALE ANALYSIS]</scope>
    <source>
        <tissue>Cervix carcinoma</tissue>
    </source>
</reference>
<reference key="8">
    <citation type="journal article" date="2011" name="BMC Syst. Biol.">
        <title>Initial characterization of the human central proteome.</title>
        <authorList>
            <person name="Burkard T.R."/>
            <person name="Planyavsky M."/>
            <person name="Kaupe I."/>
            <person name="Breitwieser F.P."/>
            <person name="Buerckstuemmer T."/>
            <person name="Bennett K.L."/>
            <person name="Superti-Furga G."/>
            <person name="Colinge J."/>
        </authorList>
    </citation>
    <scope>IDENTIFICATION BY MASS SPECTROMETRY [LARGE SCALE ANALYSIS]</scope>
</reference>
<reference key="9">
    <citation type="journal article" date="2013" name="J. Proteome Res.">
        <title>Toward a comprehensive characterization of a human cancer cell phosphoproteome.</title>
        <authorList>
            <person name="Zhou H."/>
            <person name="Di Palma S."/>
            <person name="Preisinger C."/>
            <person name="Peng M."/>
            <person name="Polat A.N."/>
            <person name="Heck A.J."/>
            <person name="Mohammed S."/>
        </authorList>
    </citation>
    <scope>PHOSPHORYLATION [LARGE SCALE ANALYSIS] AT SER-61; THR-79; THR-182 AND THR-211</scope>
    <scope>IDENTIFICATION BY MASS SPECTROMETRY [LARGE SCALE ANALYSIS]</scope>
    <source>
        <tissue>Cervix carcinoma</tissue>
        <tissue>Erythroleukemia</tissue>
    </source>
</reference>